<reference key="1">
    <citation type="submission" date="2004-07" db="EMBL/GenBank/DDBJ databases">
        <title>Full-length cDNA libraries and normalization.</title>
        <authorList>
            <person name="Li W.B."/>
            <person name="Gruber C."/>
            <person name="Jessee J."/>
            <person name="Polayes D."/>
        </authorList>
    </citation>
    <scope>NUCLEOTIDE SEQUENCE [LARGE SCALE MRNA]</scope>
    <source>
        <tissue>Placenta</tissue>
    </source>
</reference>
<reference key="2">
    <citation type="journal article" date="2004" name="Nature">
        <title>The DNA sequence and comparative analysis of human chromosome 5.</title>
        <authorList>
            <person name="Schmutz J."/>
            <person name="Martin J."/>
            <person name="Terry A."/>
            <person name="Couronne O."/>
            <person name="Grimwood J."/>
            <person name="Lowry S."/>
            <person name="Gordon L.A."/>
            <person name="Scott D."/>
            <person name="Xie G."/>
            <person name="Huang W."/>
            <person name="Hellsten U."/>
            <person name="Tran-Gyamfi M."/>
            <person name="She X."/>
            <person name="Prabhakar S."/>
            <person name="Aerts A."/>
            <person name="Altherr M."/>
            <person name="Bajorek E."/>
            <person name="Black S."/>
            <person name="Branscomb E."/>
            <person name="Caoile C."/>
            <person name="Challacombe J.F."/>
            <person name="Chan Y.M."/>
            <person name="Denys M."/>
            <person name="Detter J.C."/>
            <person name="Escobar J."/>
            <person name="Flowers D."/>
            <person name="Fotopulos D."/>
            <person name="Glavina T."/>
            <person name="Gomez M."/>
            <person name="Gonzales E."/>
            <person name="Goodstein D."/>
            <person name="Grigoriev I."/>
            <person name="Groza M."/>
            <person name="Hammon N."/>
            <person name="Hawkins T."/>
            <person name="Haydu L."/>
            <person name="Israni S."/>
            <person name="Jett J."/>
            <person name="Kadner K."/>
            <person name="Kimball H."/>
            <person name="Kobayashi A."/>
            <person name="Lopez F."/>
            <person name="Lou Y."/>
            <person name="Martinez D."/>
            <person name="Medina C."/>
            <person name="Morgan J."/>
            <person name="Nandkeshwar R."/>
            <person name="Noonan J.P."/>
            <person name="Pitluck S."/>
            <person name="Pollard M."/>
            <person name="Predki P."/>
            <person name="Priest J."/>
            <person name="Ramirez L."/>
            <person name="Retterer J."/>
            <person name="Rodriguez A."/>
            <person name="Rogers S."/>
            <person name="Salamov A."/>
            <person name="Salazar A."/>
            <person name="Thayer N."/>
            <person name="Tice H."/>
            <person name="Tsai M."/>
            <person name="Ustaszewska A."/>
            <person name="Vo N."/>
            <person name="Wheeler J."/>
            <person name="Wu K."/>
            <person name="Yang J."/>
            <person name="Dickson M."/>
            <person name="Cheng J.-F."/>
            <person name="Eichler E.E."/>
            <person name="Olsen A."/>
            <person name="Pennacchio L.A."/>
            <person name="Rokhsar D.S."/>
            <person name="Richardson P."/>
            <person name="Lucas S.M."/>
            <person name="Myers R.M."/>
            <person name="Rubin E.M."/>
        </authorList>
    </citation>
    <scope>NUCLEOTIDE SEQUENCE [LARGE SCALE GENOMIC DNA]</scope>
</reference>
<reference key="3">
    <citation type="submission" date="2005-07" db="EMBL/GenBank/DDBJ databases">
        <authorList>
            <person name="Mural R.J."/>
            <person name="Istrail S."/>
            <person name="Sutton G.G."/>
            <person name="Florea L."/>
            <person name="Halpern A.L."/>
            <person name="Mobarry C.M."/>
            <person name="Lippert R."/>
            <person name="Walenz B."/>
            <person name="Shatkay H."/>
            <person name="Dew I."/>
            <person name="Miller J.R."/>
            <person name="Flanigan M.J."/>
            <person name="Edwards N.J."/>
            <person name="Bolanos R."/>
            <person name="Fasulo D."/>
            <person name="Halldorsson B.V."/>
            <person name="Hannenhalli S."/>
            <person name="Turner R."/>
            <person name="Yooseph S."/>
            <person name="Lu F."/>
            <person name="Nusskern D.R."/>
            <person name="Shue B.C."/>
            <person name="Zheng X.H."/>
            <person name="Zhong F."/>
            <person name="Delcher A.L."/>
            <person name="Huson D.H."/>
            <person name="Kravitz S.A."/>
            <person name="Mouchard L."/>
            <person name="Reinert K."/>
            <person name="Remington K.A."/>
            <person name="Clark A.G."/>
            <person name="Waterman M.S."/>
            <person name="Eichler E.E."/>
            <person name="Adams M.D."/>
            <person name="Hunkapiller M.W."/>
            <person name="Myers E.W."/>
            <person name="Venter J.C."/>
        </authorList>
    </citation>
    <scope>NUCLEOTIDE SEQUENCE [LARGE SCALE GENOMIC DNA]</scope>
</reference>
<reference key="4">
    <citation type="journal article" date="2006" name="Leukemia">
        <title>HRap1B-retro: a novel human processed rap1B gene blurs the picture?</title>
        <authorList>
            <person name="Zemojtel T."/>
            <person name="Penzkofer T."/>
            <person name="Duchniewicz M."/>
            <person name="Zwartkruis F.J."/>
        </authorList>
    </citation>
    <scope>IDENTIFICATION</scope>
</reference>
<accession>A6NIZ1</accession>
<comment type="function">
    <text evidence="1">Probable GTP-binding protein with intrinsic GTPase activity.</text>
</comment>
<comment type="catalytic activity">
    <reaction evidence="1">
        <text>GTP + H2O = GDP + phosphate + H(+)</text>
        <dbReference type="Rhea" id="RHEA:19669"/>
        <dbReference type="ChEBI" id="CHEBI:15377"/>
        <dbReference type="ChEBI" id="CHEBI:15378"/>
        <dbReference type="ChEBI" id="CHEBI:37565"/>
        <dbReference type="ChEBI" id="CHEBI:43474"/>
        <dbReference type="ChEBI" id="CHEBI:58189"/>
        <dbReference type="EC" id="3.6.5.2"/>
    </reaction>
</comment>
<comment type="subcellular location">
    <subcellularLocation>
        <location evidence="1">Cell membrane</location>
    </subcellularLocation>
    <subcellularLocation>
        <location evidence="1">Cytoplasm</location>
        <location evidence="1">Cytosol</location>
    </subcellularLocation>
    <text evidence="1">May shuttle between plasma membrane and cytosol.</text>
</comment>
<comment type="similarity">
    <text evidence="2">Belongs to the small GTPase superfamily. Ras family.</text>
</comment>
<comment type="caution">
    <text evidence="2">There is supporting proteomic evidence with peptides unique to RAP1BL suggesting it is not a pseudogene.</text>
</comment>
<keyword id="KW-0013">ADP-ribosylation</keyword>
<keyword id="KW-1003">Cell membrane</keyword>
<keyword id="KW-0963">Cytoplasm</keyword>
<keyword id="KW-0342">GTP-binding</keyword>
<keyword id="KW-0378">Hydrolase</keyword>
<keyword id="KW-0449">Lipoprotein</keyword>
<keyword id="KW-0472">Membrane</keyword>
<keyword id="KW-0547">Nucleotide-binding</keyword>
<keyword id="KW-0636">Prenylation</keyword>
<keyword id="KW-1267">Proteomics identification</keyword>
<keyword id="KW-1185">Reference proteome</keyword>
<protein>
    <recommendedName>
        <fullName evidence="2">Ras-related protein Rap-1b-like protein</fullName>
        <ecNumber evidence="1">3.6.5.2</ecNumber>
    </recommendedName>
</protein>
<proteinExistence type="evidence at protein level"/>
<organism>
    <name type="scientific">Homo sapiens</name>
    <name type="common">Human</name>
    <dbReference type="NCBI Taxonomy" id="9606"/>
    <lineage>
        <taxon>Eukaryota</taxon>
        <taxon>Metazoa</taxon>
        <taxon>Chordata</taxon>
        <taxon>Craniata</taxon>
        <taxon>Vertebrata</taxon>
        <taxon>Euteleostomi</taxon>
        <taxon>Mammalia</taxon>
        <taxon>Eutheria</taxon>
        <taxon>Euarchontoglires</taxon>
        <taxon>Primates</taxon>
        <taxon>Haplorrhini</taxon>
        <taxon>Catarrhini</taxon>
        <taxon>Hominidae</taxon>
        <taxon>Homo</taxon>
    </lineage>
</organism>
<feature type="chain" id="PRO_0000343734" description="Ras-related protein Rap-1b-like protein">
    <location>
        <begin position="1"/>
        <end position="181"/>
    </location>
</feature>
<feature type="propeptide" id="PRO_0000343735" description="Removed in mature form" evidence="1">
    <location>
        <begin position="182"/>
        <end position="184"/>
    </location>
</feature>
<feature type="short sequence motif" description="Effector region">
    <location>
        <begin position="32"/>
        <end position="40"/>
    </location>
</feature>
<feature type="binding site" evidence="1">
    <location>
        <begin position="10"/>
        <end position="18"/>
    </location>
    <ligand>
        <name>GTP</name>
        <dbReference type="ChEBI" id="CHEBI:37565"/>
    </ligand>
</feature>
<feature type="binding site" evidence="1">
    <location>
        <begin position="57"/>
        <end position="61"/>
    </location>
    <ligand>
        <name>GTP</name>
        <dbReference type="ChEBI" id="CHEBI:37565"/>
    </ligand>
</feature>
<feature type="binding site" evidence="1">
    <location>
        <begin position="116"/>
        <end position="119"/>
    </location>
    <ligand>
        <name>GTP</name>
        <dbReference type="ChEBI" id="CHEBI:37565"/>
    </ligand>
</feature>
<feature type="binding site" evidence="1">
    <location>
        <begin position="147"/>
        <end position="149"/>
    </location>
    <ligand>
        <name>GTP</name>
        <dbReference type="ChEBI" id="CHEBI:37565"/>
    </ligand>
</feature>
<feature type="lipid moiety-binding region" description="S-geranylgeranyl cysteine" evidence="1">
    <location>
        <position position="181"/>
    </location>
</feature>
<gene>
    <name evidence="3" type="primary">RAP1BL</name>
</gene>
<dbReference type="EC" id="3.6.5.2" evidence="1"/>
<dbReference type="EMBL" id="CR611640">
    <property type="status" value="NOT_ANNOTATED_CDS"/>
    <property type="molecule type" value="mRNA"/>
</dbReference>
<dbReference type="EMBL" id="AC113404">
    <property type="status" value="NOT_ANNOTATED_CDS"/>
    <property type="molecule type" value="Genomic_DNA"/>
</dbReference>
<dbReference type="EMBL" id="CH471084">
    <property type="protein sequence ID" value="EAW95773.1"/>
    <property type="molecule type" value="Genomic_DNA"/>
</dbReference>
<dbReference type="SMR" id="A6NIZ1"/>
<dbReference type="FunCoup" id="A6NIZ1">
    <property type="interactions" value="503"/>
</dbReference>
<dbReference type="IntAct" id="A6NIZ1">
    <property type="interactions" value="19"/>
</dbReference>
<dbReference type="MINT" id="A6NIZ1"/>
<dbReference type="iPTMnet" id="A6NIZ1"/>
<dbReference type="MetOSite" id="A6NIZ1"/>
<dbReference type="PhosphoSitePlus" id="A6NIZ1"/>
<dbReference type="SwissPalm" id="A6NIZ1"/>
<dbReference type="BioMuta" id="-"/>
<dbReference type="jPOST" id="A6NIZ1"/>
<dbReference type="MassIVE" id="A6NIZ1"/>
<dbReference type="Pumba" id="A6NIZ1"/>
<dbReference type="AGR" id="HGNC:55079"/>
<dbReference type="GeneCards" id="RAP1BL"/>
<dbReference type="HGNC" id="HGNC:55079">
    <property type="gene designation" value="RAP1BL"/>
</dbReference>
<dbReference type="neXtProt" id="NX_A6NIZ1"/>
<dbReference type="HOGENOM" id="CLU_041217_9_8_1"/>
<dbReference type="InParanoid" id="A6NIZ1"/>
<dbReference type="PAN-GO" id="A6NIZ1">
    <property type="GO annotations" value="7 GO annotations based on evolutionary models"/>
</dbReference>
<dbReference type="PhylomeDB" id="A6NIZ1"/>
<dbReference type="PathwayCommons" id="A6NIZ1"/>
<dbReference type="Pharos" id="A6NIZ1">
    <property type="development level" value="Tdark"/>
</dbReference>
<dbReference type="PRO" id="PR:A6NIZ1"/>
<dbReference type="Proteomes" id="UP000005640">
    <property type="component" value="Unplaced"/>
</dbReference>
<dbReference type="RNAct" id="A6NIZ1">
    <property type="molecule type" value="protein"/>
</dbReference>
<dbReference type="GO" id="GO:0005829">
    <property type="term" value="C:cytosol"/>
    <property type="evidence" value="ECO:0007669"/>
    <property type="project" value="UniProtKB-SubCell"/>
</dbReference>
<dbReference type="GO" id="GO:0005886">
    <property type="term" value="C:plasma membrane"/>
    <property type="evidence" value="ECO:0000318"/>
    <property type="project" value="GO_Central"/>
</dbReference>
<dbReference type="GO" id="GO:0019003">
    <property type="term" value="F:GDP binding"/>
    <property type="evidence" value="ECO:0000318"/>
    <property type="project" value="GO_Central"/>
</dbReference>
<dbReference type="GO" id="GO:0005525">
    <property type="term" value="F:GTP binding"/>
    <property type="evidence" value="ECO:0000318"/>
    <property type="project" value="GO_Central"/>
</dbReference>
<dbReference type="GO" id="GO:0003924">
    <property type="term" value="F:GTPase activity"/>
    <property type="evidence" value="ECO:0000318"/>
    <property type="project" value="GO_Central"/>
</dbReference>
<dbReference type="GO" id="GO:0071320">
    <property type="term" value="P:cellular response to cAMP"/>
    <property type="evidence" value="ECO:0000318"/>
    <property type="project" value="GO_Central"/>
</dbReference>
<dbReference type="GO" id="GO:2000301">
    <property type="term" value="P:negative regulation of synaptic vesicle exocytosis"/>
    <property type="evidence" value="ECO:0000318"/>
    <property type="project" value="GO_Central"/>
</dbReference>
<dbReference type="GO" id="GO:0032486">
    <property type="term" value="P:Rap protein signal transduction"/>
    <property type="evidence" value="ECO:0000318"/>
    <property type="project" value="GO_Central"/>
</dbReference>
<dbReference type="CDD" id="cd04175">
    <property type="entry name" value="Rap1"/>
    <property type="match status" value="1"/>
</dbReference>
<dbReference type="FunFam" id="3.40.50.300:FF:000182">
    <property type="entry name" value="ras-related protein Rap-1b"/>
    <property type="match status" value="1"/>
</dbReference>
<dbReference type="Gene3D" id="3.40.50.300">
    <property type="entry name" value="P-loop containing nucleotide triphosphate hydrolases"/>
    <property type="match status" value="1"/>
</dbReference>
<dbReference type="InterPro" id="IPR027417">
    <property type="entry name" value="P-loop_NTPase"/>
</dbReference>
<dbReference type="InterPro" id="IPR038851">
    <property type="entry name" value="Rap1"/>
</dbReference>
<dbReference type="InterPro" id="IPR005225">
    <property type="entry name" value="Small_GTP-bd"/>
</dbReference>
<dbReference type="InterPro" id="IPR001806">
    <property type="entry name" value="Small_GTPase"/>
</dbReference>
<dbReference type="InterPro" id="IPR020849">
    <property type="entry name" value="Small_GTPase_Ras-type"/>
</dbReference>
<dbReference type="NCBIfam" id="TIGR00231">
    <property type="entry name" value="small_GTP"/>
    <property type="match status" value="1"/>
</dbReference>
<dbReference type="PANTHER" id="PTHR24070">
    <property type="entry name" value="RAS, DI-RAS, AND RHEB FAMILY MEMBERS OF SMALL GTPASE SUPERFAMILY"/>
    <property type="match status" value="1"/>
</dbReference>
<dbReference type="Pfam" id="PF00071">
    <property type="entry name" value="Ras"/>
    <property type="match status" value="1"/>
</dbReference>
<dbReference type="PRINTS" id="PR00449">
    <property type="entry name" value="RASTRNSFRMNG"/>
</dbReference>
<dbReference type="SMART" id="SM00175">
    <property type="entry name" value="RAB"/>
    <property type="match status" value="1"/>
</dbReference>
<dbReference type="SMART" id="SM00173">
    <property type="entry name" value="RAS"/>
    <property type="match status" value="1"/>
</dbReference>
<dbReference type="SMART" id="SM00174">
    <property type="entry name" value="RHO"/>
    <property type="match status" value="1"/>
</dbReference>
<dbReference type="SUPFAM" id="SSF52540">
    <property type="entry name" value="P-loop containing nucleoside triphosphate hydrolases"/>
    <property type="match status" value="1"/>
</dbReference>
<dbReference type="PROSITE" id="PS51421">
    <property type="entry name" value="RAS"/>
    <property type="match status" value="1"/>
</dbReference>
<evidence type="ECO:0000250" key="1">
    <source>
        <dbReference type="UniProtKB" id="P61224"/>
    </source>
</evidence>
<evidence type="ECO:0000305" key="2"/>
<evidence type="ECO:0000312" key="3">
    <source>
        <dbReference type="HGNC" id="HGNC:55079"/>
    </source>
</evidence>
<name>RP1BL_HUMAN</name>
<sequence length="184" mass="20925">MREYKLVVLGSRGVGKSALTVQFVQGIFVEKYDPTIEDSYREQVEVDAQQCMLEILDTAGTEQFTAMRDLYMKNGQGFALVYSITAQSTFNDLQDLREQILRVKDTDDVPMILVGNKCDLEDERVVGKEQGQNLARQWNNCAFLESSAKSKINVNEIFYDLVRQINRKTPVPGKARKKSSCQLL</sequence>